<gene>
    <name type="primary">C6orf163</name>
</gene>
<sequence>MIRNSDYKNFVCCAVCNKIIPPAPFGKTFKRIHEYKPLKTRFYTHKDILDIGANILKKEEQFQEDILREHIAKAEAEVWAQANERQKQAVEKALEEANDRHKIEIQILKEEHQKDLQEVTAKTKTEMYQNMDDEMKREHLAAEQRMVHRIQRIMMECHREKVEAVEKARAEERHIAQEAIQAQKSKAVEEIVNTGVTVIKDEKTSVARLMREKEHEMSILYGIAQRQRQEEVQEVLQEAEKTHQATLGNMMDKLANTQGELLSIAKQLGIMTNWKDFLEEELQETRMAFQKYINYTFPKLSPGHADFILPERKKTPSNLVIKENKTTLD</sequence>
<protein>
    <recommendedName>
        <fullName>Uncharacterized protein C6orf163</fullName>
    </recommendedName>
</protein>
<evidence type="ECO:0000255" key="1"/>
<organism>
    <name type="scientific">Homo sapiens</name>
    <name type="common">Human</name>
    <dbReference type="NCBI Taxonomy" id="9606"/>
    <lineage>
        <taxon>Eukaryota</taxon>
        <taxon>Metazoa</taxon>
        <taxon>Chordata</taxon>
        <taxon>Craniata</taxon>
        <taxon>Vertebrata</taxon>
        <taxon>Euteleostomi</taxon>
        <taxon>Mammalia</taxon>
        <taxon>Eutheria</taxon>
        <taxon>Euarchontoglires</taxon>
        <taxon>Primates</taxon>
        <taxon>Haplorrhini</taxon>
        <taxon>Catarrhini</taxon>
        <taxon>Hominidae</taxon>
        <taxon>Homo</taxon>
    </lineage>
</organism>
<reference key="1">
    <citation type="journal article" date="2003" name="Nature">
        <title>The DNA sequence and analysis of human chromosome 6.</title>
        <authorList>
            <person name="Mungall A.J."/>
            <person name="Palmer S.A."/>
            <person name="Sims S.K."/>
            <person name="Edwards C.A."/>
            <person name="Ashurst J.L."/>
            <person name="Wilming L."/>
            <person name="Jones M.C."/>
            <person name="Horton R."/>
            <person name="Hunt S.E."/>
            <person name="Scott C.E."/>
            <person name="Gilbert J.G.R."/>
            <person name="Clamp M.E."/>
            <person name="Bethel G."/>
            <person name="Milne S."/>
            <person name="Ainscough R."/>
            <person name="Almeida J.P."/>
            <person name="Ambrose K.D."/>
            <person name="Andrews T.D."/>
            <person name="Ashwell R.I.S."/>
            <person name="Babbage A.K."/>
            <person name="Bagguley C.L."/>
            <person name="Bailey J."/>
            <person name="Banerjee R."/>
            <person name="Barker D.J."/>
            <person name="Barlow K.F."/>
            <person name="Bates K."/>
            <person name="Beare D.M."/>
            <person name="Beasley H."/>
            <person name="Beasley O."/>
            <person name="Bird C.P."/>
            <person name="Blakey S.E."/>
            <person name="Bray-Allen S."/>
            <person name="Brook J."/>
            <person name="Brown A.J."/>
            <person name="Brown J.Y."/>
            <person name="Burford D.C."/>
            <person name="Burrill W."/>
            <person name="Burton J."/>
            <person name="Carder C."/>
            <person name="Carter N.P."/>
            <person name="Chapman J.C."/>
            <person name="Clark S.Y."/>
            <person name="Clark G."/>
            <person name="Clee C.M."/>
            <person name="Clegg S."/>
            <person name="Cobley V."/>
            <person name="Collier R.E."/>
            <person name="Collins J.E."/>
            <person name="Colman L.K."/>
            <person name="Corby N.R."/>
            <person name="Coville G.J."/>
            <person name="Culley K.M."/>
            <person name="Dhami P."/>
            <person name="Davies J."/>
            <person name="Dunn M."/>
            <person name="Earthrowl M.E."/>
            <person name="Ellington A.E."/>
            <person name="Evans K.A."/>
            <person name="Faulkner L."/>
            <person name="Francis M.D."/>
            <person name="Frankish A."/>
            <person name="Frankland J."/>
            <person name="French L."/>
            <person name="Garner P."/>
            <person name="Garnett J."/>
            <person name="Ghori M.J."/>
            <person name="Gilby L.M."/>
            <person name="Gillson C.J."/>
            <person name="Glithero R.J."/>
            <person name="Grafham D.V."/>
            <person name="Grant M."/>
            <person name="Gribble S."/>
            <person name="Griffiths C."/>
            <person name="Griffiths M.N.D."/>
            <person name="Hall R."/>
            <person name="Halls K.S."/>
            <person name="Hammond S."/>
            <person name="Harley J.L."/>
            <person name="Hart E.A."/>
            <person name="Heath P.D."/>
            <person name="Heathcott R."/>
            <person name="Holmes S.J."/>
            <person name="Howden P.J."/>
            <person name="Howe K.L."/>
            <person name="Howell G.R."/>
            <person name="Huckle E."/>
            <person name="Humphray S.J."/>
            <person name="Humphries M.D."/>
            <person name="Hunt A.R."/>
            <person name="Johnson C.M."/>
            <person name="Joy A.A."/>
            <person name="Kay M."/>
            <person name="Keenan S.J."/>
            <person name="Kimberley A.M."/>
            <person name="King A."/>
            <person name="Laird G.K."/>
            <person name="Langford C."/>
            <person name="Lawlor S."/>
            <person name="Leongamornlert D.A."/>
            <person name="Leversha M."/>
            <person name="Lloyd C.R."/>
            <person name="Lloyd D.M."/>
            <person name="Loveland J.E."/>
            <person name="Lovell J."/>
            <person name="Martin S."/>
            <person name="Mashreghi-Mohammadi M."/>
            <person name="Maslen G.L."/>
            <person name="Matthews L."/>
            <person name="McCann O.T."/>
            <person name="McLaren S.J."/>
            <person name="McLay K."/>
            <person name="McMurray A."/>
            <person name="Moore M.J.F."/>
            <person name="Mullikin J.C."/>
            <person name="Niblett D."/>
            <person name="Nickerson T."/>
            <person name="Novik K.L."/>
            <person name="Oliver K."/>
            <person name="Overton-Larty E.K."/>
            <person name="Parker A."/>
            <person name="Patel R."/>
            <person name="Pearce A.V."/>
            <person name="Peck A.I."/>
            <person name="Phillimore B.J.C.T."/>
            <person name="Phillips S."/>
            <person name="Plumb R.W."/>
            <person name="Porter K.M."/>
            <person name="Ramsey Y."/>
            <person name="Ranby S.A."/>
            <person name="Rice C.M."/>
            <person name="Ross M.T."/>
            <person name="Searle S.M."/>
            <person name="Sehra H.K."/>
            <person name="Sheridan E."/>
            <person name="Skuce C.D."/>
            <person name="Smith S."/>
            <person name="Smith M."/>
            <person name="Spraggon L."/>
            <person name="Squares S.L."/>
            <person name="Steward C.A."/>
            <person name="Sycamore N."/>
            <person name="Tamlyn-Hall G."/>
            <person name="Tester J."/>
            <person name="Theaker A.J."/>
            <person name="Thomas D.W."/>
            <person name="Thorpe A."/>
            <person name="Tracey A."/>
            <person name="Tromans A."/>
            <person name="Tubby B."/>
            <person name="Wall M."/>
            <person name="Wallis J.M."/>
            <person name="West A.P."/>
            <person name="White S.S."/>
            <person name="Whitehead S.L."/>
            <person name="Whittaker H."/>
            <person name="Wild A."/>
            <person name="Willey D.J."/>
            <person name="Wilmer T.E."/>
            <person name="Wood J.M."/>
            <person name="Wray P.W."/>
            <person name="Wyatt J.C."/>
            <person name="Young L."/>
            <person name="Younger R.M."/>
            <person name="Bentley D.R."/>
            <person name="Coulson A."/>
            <person name="Durbin R.M."/>
            <person name="Hubbard T."/>
            <person name="Sulston J.E."/>
            <person name="Dunham I."/>
            <person name="Rogers J."/>
            <person name="Beck S."/>
        </authorList>
    </citation>
    <scope>NUCLEOTIDE SEQUENCE [LARGE SCALE GENOMIC DNA]</scope>
</reference>
<feature type="chain" id="PRO_0000271361" description="Uncharacterized protein C6orf163">
    <location>
        <begin position="1"/>
        <end position="329"/>
    </location>
</feature>
<feature type="coiled-coil region" evidence="1">
    <location>
        <begin position="57"/>
        <end position="120"/>
    </location>
</feature>
<feature type="coiled-coil region" evidence="1">
    <location>
        <begin position="225"/>
        <end position="251"/>
    </location>
</feature>
<name>CF163_HUMAN</name>
<keyword id="KW-0175">Coiled coil</keyword>
<keyword id="KW-1267">Proteomics identification</keyword>
<keyword id="KW-1185">Reference proteome</keyword>
<dbReference type="EMBL" id="AL096817">
    <property type="status" value="NOT_ANNOTATED_CDS"/>
    <property type="molecule type" value="Genomic_DNA"/>
</dbReference>
<dbReference type="CCDS" id="CCDS55042.1"/>
<dbReference type="RefSeq" id="NP_001010868.2">
    <property type="nucleotide sequence ID" value="NM_001010868.3"/>
</dbReference>
<dbReference type="SMR" id="Q5TEZ5"/>
<dbReference type="BioGRID" id="128504">
    <property type="interactions" value="1"/>
</dbReference>
<dbReference type="STRING" id="9606.ENSP00000373575"/>
<dbReference type="iPTMnet" id="Q5TEZ5"/>
<dbReference type="PhosphoSitePlus" id="Q5TEZ5"/>
<dbReference type="BioMuta" id="C6orf163"/>
<dbReference type="DMDM" id="122063305"/>
<dbReference type="MassIVE" id="Q5TEZ5"/>
<dbReference type="PaxDb" id="9606-ENSP00000373575"/>
<dbReference type="PeptideAtlas" id="Q5TEZ5"/>
<dbReference type="ProteomicsDB" id="65068"/>
<dbReference type="Antibodypedia" id="51525">
    <property type="antibodies" value="64 antibodies from 10 providers"/>
</dbReference>
<dbReference type="DNASU" id="206412"/>
<dbReference type="Ensembl" id="ENST00000388923.5">
    <property type="protein sequence ID" value="ENSP00000373575.3"/>
    <property type="gene ID" value="ENSG00000203872.7"/>
</dbReference>
<dbReference type="GeneID" id="206412"/>
<dbReference type="KEGG" id="hsa:206412"/>
<dbReference type="MANE-Select" id="ENST00000388923.5">
    <property type="protein sequence ID" value="ENSP00000373575.3"/>
    <property type="RefSeq nucleotide sequence ID" value="NM_001010868.3"/>
    <property type="RefSeq protein sequence ID" value="NP_001010868.2"/>
</dbReference>
<dbReference type="UCSC" id="uc021zcl.2">
    <property type="organism name" value="human"/>
</dbReference>
<dbReference type="AGR" id="HGNC:21403"/>
<dbReference type="CTD" id="206412"/>
<dbReference type="DisGeNET" id="206412"/>
<dbReference type="GeneCards" id="C6orf163"/>
<dbReference type="HGNC" id="HGNC:21403">
    <property type="gene designation" value="C6orf163"/>
</dbReference>
<dbReference type="HPA" id="ENSG00000203872">
    <property type="expression patterns" value="Tissue enhanced (testis)"/>
</dbReference>
<dbReference type="neXtProt" id="NX_Q5TEZ5"/>
<dbReference type="OpenTargets" id="ENSG00000203872"/>
<dbReference type="PharmGKB" id="PA134938121"/>
<dbReference type="VEuPathDB" id="HostDB:ENSG00000203872"/>
<dbReference type="eggNOG" id="ENOG502RDFA">
    <property type="taxonomic scope" value="Eukaryota"/>
</dbReference>
<dbReference type="GeneTree" id="ENSGT00390000010837"/>
<dbReference type="HOGENOM" id="CLU_836681_0_0_1"/>
<dbReference type="InParanoid" id="Q5TEZ5"/>
<dbReference type="OMA" id="NYTNFVC"/>
<dbReference type="OrthoDB" id="8774892at2759"/>
<dbReference type="PAN-GO" id="Q5TEZ5">
    <property type="GO annotations" value="0 GO annotations based on evolutionary models"/>
</dbReference>
<dbReference type="PhylomeDB" id="Q5TEZ5"/>
<dbReference type="TreeFam" id="TF335705"/>
<dbReference type="PathwayCommons" id="Q5TEZ5"/>
<dbReference type="SignaLink" id="Q5TEZ5"/>
<dbReference type="BioGRID-ORCS" id="206412">
    <property type="hits" value="16 hits in 1124 CRISPR screens"/>
</dbReference>
<dbReference type="GenomeRNAi" id="206412"/>
<dbReference type="Pharos" id="Q5TEZ5">
    <property type="development level" value="Tdark"/>
</dbReference>
<dbReference type="PRO" id="PR:Q5TEZ5"/>
<dbReference type="Proteomes" id="UP000005640">
    <property type="component" value="Chromosome 6"/>
</dbReference>
<dbReference type="RNAct" id="Q5TEZ5">
    <property type="molecule type" value="protein"/>
</dbReference>
<dbReference type="Bgee" id="ENSG00000203872">
    <property type="expression patterns" value="Expressed in sperm and 102 other cell types or tissues"/>
</dbReference>
<dbReference type="ExpressionAtlas" id="Q5TEZ5">
    <property type="expression patterns" value="baseline and differential"/>
</dbReference>
<dbReference type="InterPro" id="IPR038927">
    <property type="entry name" value="C6orf163"/>
</dbReference>
<dbReference type="PANTHER" id="PTHR34645:SF1">
    <property type="entry name" value="GENE 136-RELATED"/>
    <property type="match status" value="1"/>
</dbReference>
<dbReference type="PANTHER" id="PTHR34645">
    <property type="entry name" value="SIMILAR TO HYPOTHETICAL PROTEIN"/>
    <property type="match status" value="1"/>
</dbReference>
<proteinExistence type="evidence at protein level"/>
<accession>Q5TEZ5</accession>